<name>NDHI_SYNJA</name>
<dbReference type="EC" id="7.1.1.-" evidence="1"/>
<dbReference type="EMBL" id="CP000239">
    <property type="protein sequence ID" value="ABC98954.1"/>
    <property type="molecule type" value="Genomic_DNA"/>
</dbReference>
<dbReference type="RefSeq" id="WP_011429638.1">
    <property type="nucleotide sequence ID" value="NC_007775.1"/>
</dbReference>
<dbReference type="SMR" id="Q2JWB4"/>
<dbReference type="STRING" id="321327.CYA_0744"/>
<dbReference type="KEGG" id="cya:CYA_0744"/>
<dbReference type="eggNOG" id="COG1143">
    <property type="taxonomic scope" value="Bacteria"/>
</dbReference>
<dbReference type="HOGENOM" id="CLU_122804_0_0_3"/>
<dbReference type="OrthoDB" id="9798098at2"/>
<dbReference type="Proteomes" id="UP000008818">
    <property type="component" value="Chromosome"/>
</dbReference>
<dbReference type="GO" id="GO:0031676">
    <property type="term" value="C:plasma membrane-derived thylakoid membrane"/>
    <property type="evidence" value="ECO:0007669"/>
    <property type="project" value="UniProtKB-SubCell"/>
</dbReference>
<dbReference type="GO" id="GO:0051539">
    <property type="term" value="F:4 iron, 4 sulfur cluster binding"/>
    <property type="evidence" value="ECO:0007669"/>
    <property type="project" value="UniProtKB-KW"/>
</dbReference>
<dbReference type="GO" id="GO:0005506">
    <property type="term" value="F:iron ion binding"/>
    <property type="evidence" value="ECO:0007669"/>
    <property type="project" value="UniProtKB-UniRule"/>
</dbReference>
<dbReference type="GO" id="GO:0008137">
    <property type="term" value="F:NADH dehydrogenase (ubiquinone) activity"/>
    <property type="evidence" value="ECO:0007669"/>
    <property type="project" value="InterPro"/>
</dbReference>
<dbReference type="GO" id="GO:0048038">
    <property type="term" value="F:quinone binding"/>
    <property type="evidence" value="ECO:0007669"/>
    <property type="project" value="UniProtKB-KW"/>
</dbReference>
<dbReference type="GO" id="GO:0019684">
    <property type="term" value="P:photosynthesis, light reaction"/>
    <property type="evidence" value="ECO:0007669"/>
    <property type="project" value="UniProtKB-UniRule"/>
</dbReference>
<dbReference type="Gene3D" id="3.30.70.3270">
    <property type="match status" value="1"/>
</dbReference>
<dbReference type="HAMAP" id="MF_01351">
    <property type="entry name" value="NDH1_NuoI"/>
    <property type="match status" value="1"/>
</dbReference>
<dbReference type="InterPro" id="IPR017896">
    <property type="entry name" value="4Fe4S_Fe-S-bd"/>
</dbReference>
<dbReference type="InterPro" id="IPR017900">
    <property type="entry name" value="4Fe4S_Fe_S_CS"/>
</dbReference>
<dbReference type="InterPro" id="IPR010226">
    <property type="entry name" value="NADH_quinone_OxRdtase_chainI"/>
</dbReference>
<dbReference type="InterPro" id="IPR004497">
    <property type="entry name" value="NDHI"/>
</dbReference>
<dbReference type="NCBIfam" id="TIGR00403">
    <property type="entry name" value="ndhI"/>
    <property type="match status" value="1"/>
</dbReference>
<dbReference type="NCBIfam" id="TIGR01971">
    <property type="entry name" value="NuoI"/>
    <property type="match status" value="1"/>
</dbReference>
<dbReference type="NCBIfam" id="NF004537">
    <property type="entry name" value="PRK05888.1-3"/>
    <property type="match status" value="1"/>
</dbReference>
<dbReference type="PANTHER" id="PTHR47275">
    <property type="entry name" value="NAD(P)H-QUINONE OXIDOREDUCTASE SUBUNIT I, CHLOROPLASTIC"/>
    <property type="match status" value="1"/>
</dbReference>
<dbReference type="PANTHER" id="PTHR47275:SF1">
    <property type="entry name" value="NAD(P)H-QUINONE OXIDOREDUCTASE SUBUNIT I, CHLOROPLASTIC"/>
    <property type="match status" value="1"/>
</dbReference>
<dbReference type="Pfam" id="PF12838">
    <property type="entry name" value="Fer4_7"/>
    <property type="match status" value="1"/>
</dbReference>
<dbReference type="SUPFAM" id="SSF54862">
    <property type="entry name" value="4Fe-4S ferredoxins"/>
    <property type="match status" value="1"/>
</dbReference>
<dbReference type="PROSITE" id="PS00198">
    <property type="entry name" value="4FE4S_FER_1"/>
    <property type="match status" value="2"/>
</dbReference>
<dbReference type="PROSITE" id="PS51379">
    <property type="entry name" value="4FE4S_FER_2"/>
    <property type="match status" value="2"/>
</dbReference>
<protein>
    <recommendedName>
        <fullName evidence="1">NAD(P)H-quinone oxidoreductase subunit I</fullName>
        <ecNumber evidence="1">7.1.1.-</ecNumber>
    </recommendedName>
    <alternativeName>
        <fullName evidence="1">NAD(P)H dehydrogenase I subunit I</fullName>
    </alternativeName>
    <alternativeName>
        <fullName evidence="1">NDH-1 subunit I</fullName>
        <shortName evidence="1">NDH-I</shortName>
    </alternativeName>
</protein>
<feature type="chain" id="PRO_0000245688" description="NAD(P)H-quinone oxidoreductase subunit I">
    <location>
        <begin position="1"/>
        <end position="210"/>
    </location>
</feature>
<feature type="domain" description="4Fe-4S ferredoxin-type 1" evidence="1">
    <location>
        <begin position="54"/>
        <end position="83"/>
    </location>
</feature>
<feature type="domain" description="4Fe-4S ferredoxin-type 2" evidence="1">
    <location>
        <begin position="94"/>
        <end position="123"/>
    </location>
</feature>
<feature type="binding site" evidence="1">
    <location>
        <position position="63"/>
    </location>
    <ligand>
        <name>[4Fe-4S] cluster</name>
        <dbReference type="ChEBI" id="CHEBI:49883"/>
        <label>1</label>
    </ligand>
</feature>
<feature type="binding site" evidence="1">
    <location>
        <position position="66"/>
    </location>
    <ligand>
        <name>[4Fe-4S] cluster</name>
        <dbReference type="ChEBI" id="CHEBI:49883"/>
        <label>1</label>
    </ligand>
</feature>
<feature type="binding site" evidence="1">
    <location>
        <position position="69"/>
    </location>
    <ligand>
        <name>[4Fe-4S] cluster</name>
        <dbReference type="ChEBI" id="CHEBI:49883"/>
        <label>1</label>
    </ligand>
</feature>
<feature type="binding site" evidence="1">
    <location>
        <position position="73"/>
    </location>
    <ligand>
        <name>[4Fe-4S] cluster</name>
        <dbReference type="ChEBI" id="CHEBI:49883"/>
        <label>2</label>
    </ligand>
</feature>
<feature type="binding site" evidence="1">
    <location>
        <position position="103"/>
    </location>
    <ligand>
        <name>[4Fe-4S] cluster</name>
        <dbReference type="ChEBI" id="CHEBI:49883"/>
        <label>2</label>
    </ligand>
</feature>
<feature type="binding site" evidence="1">
    <location>
        <position position="106"/>
    </location>
    <ligand>
        <name>[4Fe-4S] cluster</name>
        <dbReference type="ChEBI" id="CHEBI:49883"/>
        <label>2</label>
    </ligand>
</feature>
<feature type="binding site" evidence="1">
    <location>
        <position position="109"/>
    </location>
    <ligand>
        <name>[4Fe-4S] cluster</name>
        <dbReference type="ChEBI" id="CHEBI:49883"/>
        <label>2</label>
    </ligand>
</feature>
<feature type="binding site" evidence="1">
    <location>
        <position position="113"/>
    </location>
    <ligand>
        <name>[4Fe-4S] cluster</name>
        <dbReference type="ChEBI" id="CHEBI:49883"/>
        <label>1</label>
    </ligand>
</feature>
<keyword id="KW-0004">4Fe-4S</keyword>
<keyword id="KW-0408">Iron</keyword>
<keyword id="KW-0411">Iron-sulfur</keyword>
<keyword id="KW-0472">Membrane</keyword>
<keyword id="KW-0479">Metal-binding</keyword>
<keyword id="KW-0520">NAD</keyword>
<keyword id="KW-0521">NADP</keyword>
<keyword id="KW-0618">Plastoquinone</keyword>
<keyword id="KW-0874">Quinone</keyword>
<keyword id="KW-0677">Repeat</keyword>
<keyword id="KW-0793">Thylakoid</keyword>
<keyword id="KW-1278">Translocase</keyword>
<accession>Q2JWB4</accession>
<reference key="1">
    <citation type="journal article" date="2007" name="ISME J.">
        <title>Population level functional diversity in a microbial community revealed by comparative genomic and metagenomic analyses.</title>
        <authorList>
            <person name="Bhaya D."/>
            <person name="Grossman A.R."/>
            <person name="Steunou A.-S."/>
            <person name="Khuri N."/>
            <person name="Cohan F.M."/>
            <person name="Hamamura N."/>
            <person name="Melendrez M.C."/>
            <person name="Bateson M.M."/>
            <person name="Ward D.M."/>
            <person name="Heidelberg J.F."/>
        </authorList>
    </citation>
    <scope>NUCLEOTIDE SEQUENCE [LARGE SCALE GENOMIC DNA]</scope>
    <source>
        <strain>JA-3-3Ab</strain>
    </source>
</reference>
<sequence length="210" mass="23959">MTFLKRVGEYVSDAFKAAKYIGQGMGVVFDHMNRRPVTVQYPFEKLIPSERFRGRIHFEFDKCIACEICVRVCPIDLPVVDWVYNTELKKKELYSYSIDFGVCIFCANCVEFCPTNCLSVTEDYELATYDRHELNYHQVALGRLPSKVTEDPMVTPLREFAYLPKGVIDPHDLPTGSQRAGKRPEEILAEMRAAKAAEAKEDKTAAEQSN</sequence>
<comment type="function">
    <text evidence="1">NDH-1 shuttles electrons from an unknown electron donor, via FMN and iron-sulfur (Fe-S) centers, to quinones in the respiratory and/or the photosynthetic chain. The immediate electron acceptor for the enzyme in this species is believed to be plastoquinone. Couples the redox reaction to proton translocation, and thus conserves the redox energy in a proton gradient.</text>
</comment>
<comment type="catalytic activity">
    <reaction evidence="1">
        <text>a plastoquinone + NADH + (n+1) H(+)(in) = a plastoquinol + NAD(+) + n H(+)(out)</text>
        <dbReference type="Rhea" id="RHEA:42608"/>
        <dbReference type="Rhea" id="RHEA-COMP:9561"/>
        <dbReference type="Rhea" id="RHEA-COMP:9562"/>
        <dbReference type="ChEBI" id="CHEBI:15378"/>
        <dbReference type="ChEBI" id="CHEBI:17757"/>
        <dbReference type="ChEBI" id="CHEBI:57540"/>
        <dbReference type="ChEBI" id="CHEBI:57945"/>
        <dbReference type="ChEBI" id="CHEBI:62192"/>
    </reaction>
</comment>
<comment type="catalytic activity">
    <reaction evidence="1">
        <text>a plastoquinone + NADPH + (n+1) H(+)(in) = a plastoquinol + NADP(+) + n H(+)(out)</text>
        <dbReference type="Rhea" id="RHEA:42612"/>
        <dbReference type="Rhea" id="RHEA-COMP:9561"/>
        <dbReference type="Rhea" id="RHEA-COMP:9562"/>
        <dbReference type="ChEBI" id="CHEBI:15378"/>
        <dbReference type="ChEBI" id="CHEBI:17757"/>
        <dbReference type="ChEBI" id="CHEBI:57783"/>
        <dbReference type="ChEBI" id="CHEBI:58349"/>
        <dbReference type="ChEBI" id="CHEBI:62192"/>
    </reaction>
</comment>
<comment type="cofactor">
    <cofactor evidence="1">
        <name>[4Fe-4S] cluster</name>
        <dbReference type="ChEBI" id="CHEBI:49883"/>
    </cofactor>
    <text evidence="1">Binds 2 [4Fe-4S] clusters per subunit.</text>
</comment>
<comment type="subunit">
    <text evidence="1">NDH-1 is composed of at least 11 different subunits.</text>
</comment>
<comment type="subcellular location">
    <subcellularLocation>
        <location evidence="1">Cellular thylakoid membrane</location>
        <topology evidence="1">Peripheral membrane protein</topology>
    </subcellularLocation>
</comment>
<comment type="similarity">
    <text evidence="1">Belongs to the complex I 23 kDa subunit family.</text>
</comment>
<organism>
    <name type="scientific">Synechococcus sp. (strain JA-3-3Ab)</name>
    <name type="common">Cyanobacteria bacterium Yellowstone A-Prime</name>
    <dbReference type="NCBI Taxonomy" id="321327"/>
    <lineage>
        <taxon>Bacteria</taxon>
        <taxon>Bacillati</taxon>
        <taxon>Cyanobacteriota</taxon>
        <taxon>Cyanophyceae</taxon>
        <taxon>Synechococcales</taxon>
        <taxon>Synechococcaceae</taxon>
        <taxon>Synechococcus</taxon>
    </lineage>
</organism>
<evidence type="ECO:0000255" key="1">
    <source>
        <dbReference type="HAMAP-Rule" id="MF_01351"/>
    </source>
</evidence>
<proteinExistence type="inferred from homology"/>
<gene>
    <name evidence="1" type="primary">ndhI</name>
    <name type="ordered locus">CYA_0744</name>
</gene>